<comment type="catalytic activity">
    <reaction evidence="1">
        <text>D-glucuronate = D-fructuronate</text>
        <dbReference type="Rhea" id="RHEA:13049"/>
        <dbReference type="ChEBI" id="CHEBI:58720"/>
        <dbReference type="ChEBI" id="CHEBI:59863"/>
        <dbReference type="EC" id="5.3.1.12"/>
    </reaction>
</comment>
<comment type="catalytic activity">
    <reaction evidence="1">
        <text>aldehydo-D-galacturonate = keto-D-tagaturonate</text>
        <dbReference type="Rhea" id="RHEA:27702"/>
        <dbReference type="ChEBI" id="CHEBI:12952"/>
        <dbReference type="ChEBI" id="CHEBI:17886"/>
        <dbReference type="EC" id="5.3.1.12"/>
    </reaction>
</comment>
<comment type="pathway">
    <text evidence="1">Carbohydrate metabolism; pentose and glucuronate interconversion.</text>
</comment>
<comment type="similarity">
    <text evidence="1">Belongs to the metallo-dependent hydrolases superfamily. Uronate isomerase family.</text>
</comment>
<dbReference type="EC" id="5.3.1.12" evidence="1"/>
<dbReference type="EMBL" id="FM204883">
    <property type="protein sequence ID" value="CAW93089.1"/>
    <property type="molecule type" value="Genomic_DNA"/>
</dbReference>
<dbReference type="RefSeq" id="WP_012679238.1">
    <property type="nucleotide sequence ID" value="NC_012471.1"/>
</dbReference>
<dbReference type="SMR" id="C0MA32"/>
<dbReference type="KEGG" id="seu:SEQ_0716"/>
<dbReference type="HOGENOM" id="CLU_044465_1_0_9"/>
<dbReference type="OrthoDB" id="9766564at2"/>
<dbReference type="UniPathway" id="UPA00246"/>
<dbReference type="Proteomes" id="UP000001365">
    <property type="component" value="Chromosome"/>
</dbReference>
<dbReference type="GO" id="GO:0008880">
    <property type="term" value="F:glucuronate isomerase activity"/>
    <property type="evidence" value="ECO:0007669"/>
    <property type="project" value="UniProtKB-UniRule"/>
</dbReference>
<dbReference type="GO" id="GO:0019698">
    <property type="term" value="P:D-galacturonate catabolic process"/>
    <property type="evidence" value="ECO:0007669"/>
    <property type="project" value="TreeGrafter"/>
</dbReference>
<dbReference type="GO" id="GO:0042840">
    <property type="term" value="P:D-glucuronate catabolic process"/>
    <property type="evidence" value="ECO:0007669"/>
    <property type="project" value="TreeGrafter"/>
</dbReference>
<dbReference type="Gene3D" id="3.20.20.140">
    <property type="entry name" value="Metal-dependent hydrolases"/>
    <property type="match status" value="1"/>
</dbReference>
<dbReference type="Gene3D" id="1.10.2020.10">
    <property type="entry name" value="uronate isomerase, domain 2, chain A"/>
    <property type="match status" value="1"/>
</dbReference>
<dbReference type="HAMAP" id="MF_00675">
    <property type="entry name" value="UxaC"/>
    <property type="match status" value="1"/>
</dbReference>
<dbReference type="InterPro" id="IPR032466">
    <property type="entry name" value="Metal_Hydrolase"/>
</dbReference>
<dbReference type="InterPro" id="IPR003766">
    <property type="entry name" value="Uronate_isomerase"/>
</dbReference>
<dbReference type="NCBIfam" id="NF002794">
    <property type="entry name" value="PRK02925.1"/>
    <property type="match status" value="1"/>
</dbReference>
<dbReference type="PANTHER" id="PTHR30068">
    <property type="entry name" value="URONATE ISOMERASE"/>
    <property type="match status" value="1"/>
</dbReference>
<dbReference type="PANTHER" id="PTHR30068:SF4">
    <property type="entry name" value="URONATE ISOMERASE"/>
    <property type="match status" value="1"/>
</dbReference>
<dbReference type="Pfam" id="PF02614">
    <property type="entry name" value="UxaC"/>
    <property type="match status" value="1"/>
</dbReference>
<dbReference type="SUPFAM" id="SSF51556">
    <property type="entry name" value="Metallo-dependent hydrolases"/>
    <property type="match status" value="1"/>
</dbReference>
<sequence length="465" mass="53499">MAFNDDNFMLKNEAAKRLYQQIKDQPIFDYHCHLDPKEIFEDKVYDNIVDLWLGGDHYKWRLMRANGISEEEITGSASKLDKFKAFARTLQRSYGNPVYHWSVMELKNVFGVCELLTEDNAEEIYHRINAYLVEHQISPRKLIADSRVRFIGTTDHPLDDLAWHKRLAADDTFETVVAPTFRPDEAFIEHQRFADFVARLAQATGRTITDFKSFIAAMEERIAYFAENGCKASDISFTEIVFEAAEPEQLDRLMTRVLEGYQPQPLEVKQWQTAVFAELCRLYKHYGFVTQVHFGALRNNHSAIFNKLGADVGVDSLGDQTGLAINMNRLLDHLVQRDSLPKMIWYNLNPSYNIAVANTLANFQANENGIAGYLQFGAGWWFADTKLGMISQMNALAEQGLLANFVGMLTDSRSFLSYQRHDYFRRILSTYLGEWIEEGEVPEDYQALGKMAQDIAYNNAIQYFN</sequence>
<keyword id="KW-0413">Isomerase</keyword>
<organism>
    <name type="scientific">Streptococcus equi subsp. equi (strain 4047)</name>
    <dbReference type="NCBI Taxonomy" id="553482"/>
    <lineage>
        <taxon>Bacteria</taxon>
        <taxon>Bacillati</taxon>
        <taxon>Bacillota</taxon>
        <taxon>Bacilli</taxon>
        <taxon>Lactobacillales</taxon>
        <taxon>Streptococcaceae</taxon>
        <taxon>Streptococcus</taxon>
    </lineage>
</organism>
<gene>
    <name evidence="1" type="primary">uxaC</name>
    <name type="ordered locus">SEQ_0716</name>
</gene>
<proteinExistence type="inferred from homology"/>
<protein>
    <recommendedName>
        <fullName evidence="1">Uronate isomerase</fullName>
        <ecNumber evidence="1">5.3.1.12</ecNumber>
    </recommendedName>
    <alternativeName>
        <fullName evidence="1">Glucuronate isomerase</fullName>
    </alternativeName>
    <alternativeName>
        <fullName evidence="1">Uronic isomerase</fullName>
    </alternativeName>
</protein>
<evidence type="ECO:0000255" key="1">
    <source>
        <dbReference type="HAMAP-Rule" id="MF_00675"/>
    </source>
</evidence>
<accession>C0MA32</accession>
<feature type="chain" id="PRO_1000147692" description="Uronate isomerase">
    <location>
        <begin position="1"/>
        <end position="465"/>
    </location>
</feature>
<name>UXAC_STRE4</name>
<reference key="1">
    <citation type="journal article" date="2009" name="PLoS Pathog.">
        <title>Genomic evidence for the evolution of Streptococcus equi: host restriction, increased virulence, and genetic exchange with human pathogens.</title>
        <authorList>
            <person name="Holden M.T.G."/>
            <person name="Heather Z."/>
            <person name="Paillot R."/>
            <person name="Steward K.F."/>
            <person name="Webb K."/>
            <person name="Ainslie F."/>
            <person name="Jourdan T."/>
            <person name="Bason N.C."/>
            <person name="Holroyd N.E."/>
            <person name="Mungall K."/>
            <person name="Quail M.A."/>
            <person name="Sanders M."/>
            <person name="Simmonds M."/>
            <person name="Willey D."/>
            <person name="Brooks K."/>
            <person name="Aanensen D.M."/>
            <person name="Spratt B.G."/>
            <person name="Jolley K.A."/>
            <person name="Maiden M.C.J."/>
            <person name="Kehoe M."/>
            <person name="Chanter N."/>
            <person name="Bentley S.D."/>
            <person name="Robinson C."/>
            <person name="Maskell D.J."/>
            <person name="Parkhill J."/>
            <person name="Waller A.S."/>
        </authorList>
    </citation>
    <scope>NUCLEOTIDE SEQUENCE [LARGE SCALE GENOMIC DNA]</scope>
    <source>
        <strain>4047</strain>
    </source>
</reference>